<name>GCST_FRATW</name>
<keyword id="KW-0032">Aminotransferase</keyword>
<keyword id="KW-0808">Transferase</keyword>
<evidence type="ECO:0000255" key="1">
    <source>
        <dbReference type="HAMAP-Rule" id="MF_00259"/>
    </source>
</evidence>
<reference key="1">
    <citation type="journal article" date="2007" name="PLoS ONE">
        <title>Complete genomic characterization of a pathogenic A.II strain of Francisella tularensis subspecies tularensis.</title>
        <authorList>
            <person name="Beckstrom-Sternberg S.M."/>
            <person name="Auerbach R.K."/>
            <person name="Godbole S."/>
            <person name="Pearson J.V."/>
            <person name="Beckstrom-Sternberg J.S."/>
            <person name="Deng Z."/>
            <person name="Munk C."/>
            <person name="Kubota K."/>
            <person name="Zhou Y."/>
            <person name="Bruce D."/>
            <person name="Noronha J."/>
            <person name="Scheuermann R.H."/>
            <person name="Wang A."/>
            <person name="Wei X."/>
            <person name="Wang J."/>
            <person name="Hao J."/>
            <person name="Wagner D.M."/>
            <person name="Brettin T.S."/>
            <person name="Brown N."/>
            <person name="Gilna P."/>
            <person name="Keim P.S."/>
        </authorList>
    </citation>
    <scope>NUCLEOTIDE SEQUENCE [LARGE SCALE GENOMIC DNA]</scope>
    <source>
        <strain>WY96-3418</strain>
    </source>
</reference>
<organism>
    <name type="scientific">Francisella tularensis subsp. tularensis (strain WY96-3418)</name>
    <dbReference type="NCBI Taxonomy" id="418136"/>
    <lineage>
        <taxon>Bacteria</taxon>
        <taxon>Pseudomonadati</taxon>
        <taxon>Pseudomonadota</taxon>
        <taxon>Gammaproteobacteria</taxon>
        <taxon>Thiotrichales</taxon>
        <taxon>Francisellaceae</taxon>
        <taxon>Francisella</taxon>
    </lineage>
</organism>
<sequence>MLKTPLYESHIAANAKMVDFSGWSMPINYGSQIQEHNNVREDCGIFDVSHMLAVDIQGSEAEKFLRYLLANDVAKLQENKAQYGCMLNHDAGIVDDLITYKVTDEHFRIVVNAGNRESDVAWFNQNAQNFDVAITPQTDLAIVAVQGPKAVAVIKRVVTKEIAAEIEALLPFSFKFFSKWMVARTGYTGEDGFEVILPATQVKKFWDSLLENGAQPAGLGARDTLRLEAGMHLYGADMDTSTTPLERGLGWSVDLSDEHRDFIGKKAYLAKKAQGVDTKWVGVVLKTKGVLRAGQEIDFDNGEKGYITSGSFSPTLKVAIGLAYVPKQADNPVVNIRGKELEVELVKPKFVKNGKSLI</sequence>
<protein>
    <recommendedName>
        <fullName evidence="1">Aminomethyltransferase</fullName>
        <ecNumber evidence="1">2.1.2.10</ecNumber>
    </recommendedName>
    <alternativeName>
        <fullName evidence="1">Glycine cleavage system T protein</fullName>
    </alternativeName>
</protein>
<accession>A4IZK8</accession>
<comment type="function">
    <text evidence="1">The glycine cleavage system catalyzes the degradation of glycine.</text>
</comment>
<comment type="catalytic activity">
    <reaction evidence="1">
        <text>N(6)-[(R)-S(8)-aminomethyldihydrolipoyl]-L-lysyl-[protein] + (6S)-5,6,7,8-tetrahydrofolate = N(6)-[(R)-dihydrolipoyl]-L-lysyl-[protein] + (6R)-5,10-methylene-5,6,7,8-tetrahydrofolate + NH4(+)</text>
        <dbReference type="Rhea" id="RHEA:16945"/>
        <dbReference type="Rhea" id="RHEA-COMP:10475"/>
        <dbReference type="Rhea" id="RHEA-COMP:10492"/>
        <dbReference type="ChEBI" id="CHEBI:15636"/>
        <dbReference type="ChEBI" id="CHEBI:28938"/>
        <dbReference type="ChEBI" id="CHEBI:57453"/>
        <dbReference type="ChEBI" id="CHEBI:83100"/>
        <dbReference type="ChEBI" id="CHEBI:83143"/>
        <dbReference type="EC" id="2.1.2.10"/>
    </reaction>
</comment>
<comment type="subunit">
    <text evidence="1">The glycine cleavage system is composed of four proteins: P, T, L and H.</text>
</comment>
<comment type="similarity">
    <text evidence="1">Belongs to the GcvT family.</text>
</comment>
<proteinExistence type="inferred from homology"/>
<dbReference type="EC" id="2.1.2.10" evidence="1"/>
<dbReference type="EMBL" id="CP000608">
    <property type="protein sequence ID" value="ABO47358.1"/>
    <property type="molecule type" value="Genomic_DNA"/>
</dbReference>
<dbReference type="RefSeq" id="WP_003018002.1">
    <property type="nucleotide sequence ID" value="NC_009257.1"/>
</dbReference>
<dbReference type="SMR" id="A4IZK8"/>
<dbReference type="KEGG" id="ftw:FTW_1666"/>
<dbReference type="HOGENOM" id="CLU_007884_10_2_6"/>
<dbReference type="GO" id="GO:0005829">
    <property type="term" value="C:cytosol"/>
    <property type="evidence" value="ECO:0007669"/>
    <property type="project" value="TreeGrafter"/>
</dbReference>
<dbReference type="GO" id="GO:0005960">
    <property type="term" value="C:glycine cleavage complex"/>
    <property type="evidence" value="ECO:0007669"/>
    <property type="project" value="InterPro"/>
</dbReference>
<dbReference type="GO" id="GO:0004047">
    <property type="term" value="F:aminomethyltransferase activity"/>
    <property type="evidence" value="ECO:0007669"/>
    <property type="project" value="UniProtKB-UniRule"/>
</dbReference>
<dbReference type="GO" id="GO:0008483">
    <property type="term" value="F:transaminase activity"/>
    <property type="evidence" value="ECO:0007669"/>
    <property type="project" value="UniProtKB-KW"/>
</dbReference>
<dbReference type="GO" id="GO:0019464">
    <property type="term" value="P:glycine decarboxylation via glycine cleavage system"/>
    <property type="evidence" value="ECO:0007669"/>
    <property type="project" value="UniProtKB-UniRule"/>
</dbReference>
<dbReference type="FunFam" id="3.30.70.1400:FF:000001">
    <property type="entry name" value="Aminomethyltransferase"/>
    <property type="match status" value="1"/>
</dbReference>
<dbReference type="FunFam" id="4.10.1250.10:FF:000001">
    <property type="entry name" value="Aminomethyltransferase"/>
    <property type="match status" value="1"/>
</dbReference>
<dbReference type="Gene3D" id="2.40.30.110">
    <property type="entry name" value="Aminomethyltransferase beta-barrel domains"/>
    <property type="match status" value="1"/>
</dbReference>
<dbReference type="Gene3D" id="3.30.70.1400">
    <property type="entry name" value="Aminomethyltransferase beta-barrel domains"/>
    <property type="match status" value="1"/>
</dbReference>
<dbReference type="Gene3D" id="4.10.1250.10">
    <property type="entry name" value="Aminomethyltransferase fragment"/>
    <property type="match status" value="1"/>
</dbReference>
<dbReference type="Gene3D" id="3.30.1360.120">
    <property type="entry name" value="Probable tRNA modification gtpase trme, domain 1"/>
    <property type="match status" value="1"/>
</dbReference>
<dbReference type="HAMAP" id="MF_00259">
    <property type="entry name" value="GcvT"/>
    <property type="match status" value="1"/>
</dbReference>
<dbReference type="InterPro" id="IPR006223">
    <property type="entry name" value="GCS_T"/>
</dbReference>
<dbReference type="InterPro" id="IPR022903">
    <property type="entry name" value="GCS_T_bac"/>
</dbReference>
<dbReference type="InterPro" id="IPR013977">
    <property type="entry name" value="GCST_C"/>
</dbReference>
<dbReference type="InterPro" id="IPR006222">
    <property type="entry name" value="GCV_T_N"/>
</dbReference>
<dbReference type="InterPro" id="IPR028896">
    <property type="entry name" value="GcvT/YgfZ/DmdA"/>
</dbReference>
<dbReference type="InterPro" id="IPR029043">
    <property type="entry name" value="GcvT/YgfZ_C"/>
</dbReference>
<dbReference type="InterPro" id="IPR027266">
    <property type="entry name" value="TrmE/GcvT_dom1"/>
</dbReference>
<dbReference type="NCBIfam" id="TIGR00528">
    <property type="entry name" value="gcvT"/>
    <property type="match status" value="1"/>
</dbReference>
<dbReference type="NCBIfam" id="NF001567">
    <property type="entry name" value="PRK00389.1"/>
    <property type="match status" value="1"/>
</dbReference>
<dbReference type="PANTHER" id="PTHR43757">
    <property type="entry name" value="AMINOMETHYLTRANSFERASE"/>
    <property type="match status" value="1"/>
</dbReference>
<dbReference type="PANTHER" id="PTHR43757:SF2">
    <property type="entry name" value="AMINOMETHYLTRANSFERASE, MITOCHONDRIAL"/>
    <property type="match status" value="1"/>
</dbReference>
<dbReference type="Pfam" id="PF01571">
    <property type="entry name" value="GCV_T"/>
    <property type="match status" value="1"/>
</dbReference>
<dbReference type="Pfam" id="PF08669">
    <property type="entry name" value="GCV_T_C"/>
    <property type="match status" value="1"/>
</dbReference>
<dbReference type="PIRSF" id="PIRSF006487">
    <property type="entry name" value="GcvT"/>
    <property type="match status" value="1"/>
</dbReference>
<dbReference type="SUPFAM" id="SSF101790">
    <property type="entry name" value="Aminomethyltransferase beta-barrel domain"/>
    <property type="match status" value="1"/>
</dbReference>
<dbReference type="SUPFAM" id="SSF103025">
    <property type="entry name" value="Folate-binding domain"/>
    <property type="match status" value="1"/>
</dbReference>
<gene>
    <name evidence="1" type="primary">gcvT</name>
    <name type="ordered locus">FTW_1666</name>
</gene>
<feature type="chain" id="PRO_1000047671" description="Aminomethyltransferase">
    <location>
        <begin position="1"/>
        <end position="358"/>
    </location>
</feature>